<organism>
    <name type="scientific">Desulfurococcus amylolyticus (strain DSM 18924 / JCM 16383 / VKM B-2413 / 1221n)</name>
    <name type="common">Desulfurococcus kamchatkensis</name>
    <dbReference type="NCBI Taxonomy" id="490899"/>
    <lineage>
        <taxon>Archaea</taxon>
        <taxon>Thermoproteota</taxon>
        <taxon>Thermoprotei</taxon>
        <taxon>Desulfurococcales</taxon>
        <taxon>Desulfurococcaceae</taxon>
        <taxon>Desulfurococcus</taxon>
    </lineage>
</organism>
<feature type="chain" id="PRO_1000147268" description="Large ribosomal subunit protein eL39">
    <location>
        <begin position="1"/>
        <end position="52"/>
    </location>
</feature>
<keyword id="KW-0687">Ribonucleoprotein</keyword>
<keyword id="KW-0689">Ribosomal protein</keyword>
<sequence length="52" mass="6200">MARFKHVARKLRLAAALKSNRAIPIWVSAKTRLRVRRGFSLRNWRRSKLKNI</sequence>
<evidence type="ECO:0000255" key="1">
    <source>
        <dbReference type="HAMAP-Rule" id="MF_00629"/>
    </source>
</evidence>
<evidence type="ECO:0000305" key="2"/>
<comment type="similarity">
    <text evidence="1">Belongs to the eukaryotic ribosomal protein eL39 family.</text>
</comment>
<dbReference type="EMBL" id="CP001140">
    <property type="protein sequence ID" value="ACL11438.1"/>
    <property type="molecule type" value="Genomic_DNA"/>
</dbReference>
<dbReference type="RefSeq" id="WP_012608779.1">
    <property type="nucleotide sequence ID" value="NC_011766.1"/>
</dbReference>
<dbReference type="SMR" id="B8D5Q7"/>
<dbReference type="STRING" id="490899.DKAM_1112"/>
<dbReference type="GeneID" id="7171821"/>
<dbReference type="KEGG" id="dka:DKAM_1112"/>
<dbReference type="eggNOG" id="arCOG04177">
    <property type="taxonomic scope" value="Archaea"/>
</dbReference>
<dbReference type="HOGENOM" id="CLU_181948_4_0_2"/>
<dbReference type="Proteomes" id="UP000006903">
    <property type="component" value="Chromosome"/>
</dbReference>
<dbReference type="GO" id="GO:1990904">
    <property type="term" value="C:ribonucleoprotein complex"/>
    <property type="evidence" value="ECO:0007669"/>
    <property type="project" value="UniProtKB-KW"/>
</dbReference>
<dbReference type="GO" id="GO:0005840">
    <property type="term" value="C:ribosome"/>
    <property type="evidence" value="ECO:0007669"/>
    <property type="project" value="UniProtKB-KW"/>
</dbReference>
<dbReference type="GO" id="GO:0003735">
    <property type="term" value="F:structural constituent of ribosome"/>
    <property type="evidence" value="ECO:0007669"/>
    <property type="project" value="InterPro"/>
</dbReference>
<dbReference type="GO" id="GO:0006412">
    <property type="term" value="P:translation"/>
    <property type="evidence" value="ECO:0007669"/>
    <property type="project" value="UniProtKB-UniRule"/>
</dbReference>
<dbReference type="Gene3D" id="1.10.1620.10">
    <property type="entry name" value="Ribosomal protein L39e"/>
    <property type="match status" value="1"/>
</dbReference>
<dbReference type="HAMAP" id="MF_00629">
    <property type="entry name" value="Ribosomal_eL39"/>
    <property type="match status" value="1"/>
</dbReference>
<dbReference type="InterPro" id="IPR000077">
    <property type="entry name" value="Ribosomal_eL39"/>
</dbReference>
<dbReference type="InterPro" id="IPR023626">
    <property type="entry name" value="Ribosomal_eL39_dom_sf"/>
</dbReference>
<dbReference type="NCBIfam" id="NF002316">
    <property type="entry name" value="PRK01242.1"/>
    <property type="match status" value="1"/>
</dbReference>
<dbReference type="Pfam" id="PF00832">
    <property type="entry name" value="Ribosomal_L39"/>
    <property type="match status" value="1"/>
</dbReference>
<dbReference type="SUPFAM" id="SSF48662">
    <property type="entry name" value="Ribosomal protein L39e"/>
    <property type="match status" value="1"/>
</dbReference>
<reference key="1">
    <citation type="journal article" date="2009" name="J. Bacteriol.">
        <title>Complete genome sequence of the anaerobic, protein-degrading hyperthermophilic crenarchaeon Desulfurococcus kamchatkensis.</title>
        <authorList>
            <person name="Ravin N.V."/>
            <person name="Mardanov A.V."/>
            <person name="Beletsky A.V."/>
            <person name="Kublanov I.V."/>
            <person name="Kolganova T.V."/>
            <person name="Lebedinsky A.V."/>
            <person name="Chernyh N.A."/>
            <person name="Bonch-Osmolovskaya E.A."/>
            <person name="Skryabin K.G."/>
        </authorList>
    </citation>
    <scope>NUCLEOTIDE SEQUENCE [LARGE SCALE GENOMIC DNA]</scope>
    <source>
        <strain>DSM 18924 / JCM 16383 / VKM B-2413 / 1221n</strain>
    </source>
</reference>
<proteinExistence type="inferred from homology"/>
<name>RL39_DESA1</name>
<gene>
    <name evidence="1" type="primary">rpl39e</name>
    <name type="ordered locus">DKAM_1112</name>
</gene>
<protein>
    <recommendedName>
        <fullName evidence="1">Large ribosomal subunit protein eL39</fullName>
    </recommendedName>
    <alternativeName>
        <fullName evidence="2">50S ribosomal protein L39e</fullName>
    </alternativeName>
</protein>
<accession>B8D5Q7</accession>